<dbReference type="EC" id="3.5.4.2" evidence="1"/>
<dbReference type="EMBL" id="BA000016">
    <property type="protein sequence ID" value="BAB80974.1"/>
    <property type="molecule type" value="Genomic_DNA"/>
</dbReference>
<dbReference type="RefSeq" id="WP_011010354.1">
    <property type="nucleotide sequence ID" value="NC_003366.1"/>
</dbReference>
<dbReference type="SMR" id="Q8XKX4"/>
<dbReference type="STRING" id="195102.gene:10490531"/>
<dbReference type="KEGG" id="cpe:CPE1268"/>
<dbReference type="HOGENOM" id="CLU_027935_0_0_9"/>
<dbReference type="Proteomes" id="UP000000818">
    <property type="component" value="Chromosome"/>
</dbReference>
<dbReference type="GO" id="GO:0000034">
    <property type="term" value="F:adenine deaminase activity"/>
    <property type="evidence" value="ECO:0007669"/>
    <property type="project" value="UniProtKB-UniRule"/>
</dbReference>
<dbReference type="GO" id="GO:0006146">
    <property type="term" value="P:adenine catabolic process"/>
    <property type="evidence" value="ECO:0007669"/>
    <property type="project" value="InterPro"/>
</dbReference>
<dbReference type="CDD" id="cd01295">
    <property type="entry name" value="AdeC"/>
    <property type="match status" value="1"/>
</dbReference>
<dbReference type="Gene3D" id="3.20.20.140">
    <property type="entry name" value="Metal-dependent hydrolases"/>
    <property type="match status" value="1"/>
</dbReference>
<dbReference type="Gene3D" id="2.30.40.10">
    <property type="entry name" value="Urease, subunit C, domain 1"/>
    <property type="match status" value="1"/>
</dbReference>
<dbReference type="HAMAP" id="MF_01518">
    <property type="entry name" value="Adenine_deamin"/>
    <property type="match status" value="1"/>
</dbReference>
<dbReference type="InterPro" id="IPR006679">
    <property type="entry name" value="Adenine_deam"/>
</dbReference>
<dbReference type="InterPro" id="IPR026912">
    <property type="entry name" value="Adenine_deam_C"/>
</dbReference>
<dbReference type="InterPro" id="IPR006680">
    <property type="entry name" value="Amidohydro-rel"/>
</dbReference>
<dbReference type="InterPro" id="IPR011059">
    <property type="entry name" value="Metal-dep_hydrolase_composite"/>
</dbReference>
<dbReference type="InterPro" id="IPR032466">
    <property type="entry name" value="Metal_Hydrolase"/>
</dbReference>
<dbReference type="PANTHER" id="PTHR11113:SF2">
    <property type="entry name" value="ADENINE DEAMINASE"/>
    <property type="match status" value="1"/>
</dbReference>
<dbReference type="PANTHER" id="PTHR11113">
    <property type="entry name" value="N-ACETYLGLUCOSAMINE-6-PHOSPHATE DEACETYLASE"/>
    <property type="match status" value="1"/>
</dbReference>
<dbReference type="Pfam" id="PF13382">
    <property type="entry name" value="Adenine_deam_C"/>
    <property type="match status" value="1"/>
</dbReference>
<dbReference type="Pfam" id="PF01979">
    <property type="entry name" value="Amidohydro_1"/>
    <property type="match status" value="1"/>
</dbReference>
<dbReference type="SUPFAM" id="SSF51338">
    <property type="entry name" value="Composite domain of metallo-dependent hydrolases"/>
    <property type="match status" value="1"/>
</dbReference>
<dbReference type="SUPFAM" id="SSF51556">
    <property type="entry name" value="Metallo-dependent hydrolases"/>
    <property type="match status" value="1"/>
</dbReference>
<gene>
    <name evidence="1" type="primary">ade</name>
    <name type="synonym">adeC</name>
    <name type="ordered locus">CPE1268</name>
</gene>
<organism>
    <name type="scientific">Clostridium perfringens (strain 13 / Type A)</name>
    <dbReference type="NCBI Taxonomy" id="195102"/>
    <lineage>
        <taxon>Bacteria</taxon>
        <taxon>Bacillati</taxon>
        <taxon>Bacillota</taxon>
        <taxon>Clostridia</taxon>
        <taxon>Eubacteriales</taxon>
        <taxon>Clostridiaceae</taxon>
        <taxon>Clostridium</taxon>
    </lineage>
</organism>
<feature type="chain" id="PRO_0000142413" description="Adenine deaminase">
    <location>
        <begin position="1"/>
        <end position="572"/>
    </location>
</feature>
<keyword id="KW-0378">Hydrolase</keyword>
<keyword id="KW-0464">Manganese</keyword>
<keyword id="KW-1185">Reference proteome</keyword>
<sequence length="572" mass="64763">MQVELIIKNLKVYNSYFKKFIKSDVLINEGKFLHIGKGYEDRLWSENIIDGEDKYIIPGLIDIHMHIESSMTIPREFSKAAIKHGVTTVVADPHEIANVFGVRGIEEFIKFKGNLDIFYGIPSSVPSTSSSLETTGEKITHNEVKRLLEYDNIICLGEVMNFKDLIEDDDSNINKIINISKEKNIPLEGHCPKIQGVDLSLYIYRGVNGDHTQQSVGSLQEKIQNGMFIEMQHKSMTLENIKFLIENNLYEHFALVTDDVMADKLVKGHLDEILKEAVKLGMSIENAIYASTYTPARRMNLLDRGTIAPGKLADFILLDSIEDFNIYEVYKNGEMVFNRDKGLKEEFFEDKSKLDYRFYNSIELNNITKESLEVKVPNKYKNKVNCRTMKVLKNTTFTEEGEVTLNVYNNILQWEKSSCALIAVFERYGKNNNISFGLVEGEIIKEGAIATTWAHDHHNLMVMGRNISDMTIAANEVINSRGGYVVSKNNEVIAKLELPIGGIISDEPIEIIGEKLGEVRNAMRDLGYNHMNEIMSFSTLSLPVSPALKITDKGLIDVKKGSIVSLFKKGLY</sequence>
<accession>Q8XKX4</accession>
<reference key="1">
    <citation type="journal article" date="2002" name="Proc. Natl. Acad. Sci. U.S.A.">
        <title>Complete genome sequence of Clostridium perfringens, an anaerobic flesh-eater.</title>
        <authorList>
            <person name="Shimizu T."/>
            <person name="Ohtani K."/>
            <person name="Hirakawa H."/>
            <person name="Ohshima K."/>
            <person name="Yamashita A."/>
            <person name="Shiba T."/>
            <person name="Ogasawara N."/>
            <person name="Hattori M."/>
            <person name="Kuhara S."/>
            <person name="Hayashi H."/>
        </authorList>
    </citation>
    <scope>NUCLEOTIDE SEQUENCE [LARGE SCALE GENOMIC DNA]</scope>
    <source>
        <strain>13 / Type A</strain>
    </source>
</reference>
<proteinExistence type="inferred from homology"/>
<evidence type="ECO:0000255" key="1">
    <source>
        <dbReference type="HAMAP-Rule" id="MF_01518"/>
    </source>
</evidence>
<name>ADEC_CLOPE</name>
<protein>
    <recommendedName>
        <fullName evidence="1">Adenine deaminase</fullName>
        <shortName evidence="1">Adenase</shortName>
        <shortName evidence="1">Adenine aminase</shortName>
        <ecNumber evidence="1">3.5.4.2</ecNumber>
    </recommendedName>
</protein>
<comment type="catalytic activity">
    <reaction evidence="1">
        <text>adenine + H2O + H(+) = hypoxanthine + NH4(+)</text>
        <dbReference type="Rhea" id="RHEA:23688"/>
        <dbReference type="ChEBI" id="CHEBI:15377"/>
        <dbReference type="ChEBI" id="CHEBI:15378"/>
        <dbReference type="ChEBI" id="CHEBI:16708"/>
        <dbReference type="ChEBI" id="CHEBI:17368"/>
        <dbReference type="ChEBI" id="CHEBI:28938"/>
        <dbReference type="EC" id="3.5.4.2"/>
    </reaction>
</comment>
<comment type="cofactor">
    <cofactor evidence="1">
        <name>Mn(2+)</name>
        <dbReference type="ChEBI" id="CHEBI:29035"/>
    </cofactor>
</comment>
<comment type="similarity">
    <text evidence="1">Belongs to the metallo-dependent hydrolases superfamily. Adenine deaminase family.</text>
</comment>